<comment type="function">
    <text evidence="1">Heme chaperone required for the biogenesis of c-type cytochromes. Transiently binds heme delivered by CcmC and transfers the heme to apo-cytochromes in a process facilitated by CcmF and CcmH.</text>
</comment>
<comment type="subcellular location">
    <subcellularLocation>
        <location evidence="1">Cell inner membrane</location>
        <topology evidence="1">Single-pass type II membrane protein</topology>
        <orientation evidence="1">Periplasmic side</orientation>
    </subcellularLocation>
</comment>
<comment type="similarity">
    <text evidence="1">Belongs to the CcmE/CycJ family.</text>
</comment>
<evidence type="ECO:0000255" key="1">
    <source>
        <dbReference type="HAMAP-Rule" id="MF_01959"/>
    </source>
</evidence>
<evidence type="ECO:0000256" key="2">
    <source>
        <dbReference type="SAM" id="MobiDB-lite"/>
    </source>
</evidence>
<dbReference type="EMBL" id="CP000283">
    <property type="protein sequence ID" value="ABE39237.1"/>
    <property type="molecule type" value="Genomic_DNA"/>
</dbReference>
<dbReference type="SMR" id="Q139K2"/>
<dbReference type="STRING" id="316057.RPD_2002"/>
<dbReference type="KEGG" id="rpd:RPD_2002"/>
<dbReference type="eggNOG" id="COG2332">
    <property type="taxonomic scope" value="Bacteria"/>
</dbReference>
<dbReference type="HOGENOM" id="CLU_079503_1_1_5"/>
<dbReference type="BioCyc" id="RPAL316057:RPD_RS10055-MONOMER"/>
<dbReference type="Proteomes" id="UP000001818">
    <property type="component" value="Chromosome"/>
</dbReference>
<dbReference type="GO" id="GO:0005886">
    <property type="term" value="C:plasma membrane"/>
    <property type="evidence" value="ECO:0007669"/>
    <property type="project" value="UniProtKB-SubCell"/>
</dbReference>
<dbReference type="GO" id="GO:0020037">
    <property type="term" value="F:heme binding"/>
    <property type="evidence" value="ECO:0007669"/>
    <property type="project" value="InterPro"/>
</dbReference>
<dbReference type="GO" id="GO:0046872">
    <property type="term" value="F:metal ion binding"/>
    <property type="evidence" value="ECO:0007669"/>
    <property type="project" value="UniProtKB-KW"/>
</dbReference>
<dbReference type="GO" id="GO:0017004">
    <property type="term" value="P:cytochrome complex assembly"/>
    <property type="evidence" value="ECO:0007669"/>
    <property type="project" value="UniProtKB-KW"/>
</dbReference>
<dbReference type="Gene3D" id="2.40.50.140">
    <property type="entry name" value="Nucleic acid-binding proteins"/>
    <property type="match status" value="1"/>
</dbReference>
<dbReference type="HAMAP" id="MF_01959">
    <property type="entry name" value="CcmE"/>
    <property type="match status" value="1"/>
</dbReference>
<dbReference type="InterPro" id="IPR004329">
    <property type="entry name" value="CcmE"/>
</dbReference>
<dbReference type="InterPro" id="IPR036127">
    <property type="entry name" value="CcmE-like_sf"/>
</dbReference>
<dbReference type="InterPro" id="IPR012340">
    <property type="entry name" value="NA-bd_OB-fold"/>
</dbReference>
<dbReference type="NCBIfam" id="NF009727">
    <property type="entry name" value="PRK13254.1-1"/>
    <property type="match status" value="1"/>
</dbReference>
<dbReference type="NCBIfam" id="NF009731">
    <property type="entry name" value="PRK13254.1-5"/>
    <property type="match status" value="1"/>
</dbReference>
<dbReference type="PANTHER" id="PTHR34128">
    <property type="entry name" value="CYTOCHROME C-TYPE BIOGENESIS PROTEIN CCME HOMOLOG, MITOCHONDRIAL"/>
    <property type="match status" value="1"/>
</dbReference>
<dbReference type="PANTHER" id="PTHR34128:SF2">
    <property type="entry name" value="CYTOCHROME C-TYPE BIOGENESIS PROTEIN CCME HOMOLOG, MITOCHONDRIAL"/>
    <property type="match status" value="1"/>
</dbReference>
<dbReference type="Pfam" id="PF03100">
    <property type="entry name" value="CcmE"/>
    <property type="match status" value="1"/>
</dbReference>
<dbReference type="SUPFAM" id="SSF82093">
    <property type="entry name" value="Heme chaperone CcmE"/>
    <property type="match status" value="1"/>
</dbReference>
<sequence length="164" mass="17229">MTRKQRRLLMIGGAGVVLVVAVGLVLNAMRGSIVFFSTPKMVSEQQIGAGTRFRLGGVVEPGSLHRGDQLAVSFKVSDGAATVPVAFKGILPDLFREGQGVIAEGALDTAGVFKADTVLAKHDETYMPKEVADALKKQGHWKDDYEKKPPGAPGASADAAGPSR</sequence>
<accession>Q139K2</accession>
<gene>
    <name evidence="1" type="primary">ccmE</name>
    <name evidence="1" type="synonym">cycJ</name>
    <name type="ordered locus">RPD_2002</name>
</gene>
<organism>
    <name type="scientific">Rhodopseudomonas palustris (strain BisB5)</name>
    <dbReference type="NCBI Taxonomy" id="316057"/>
    <lineage>
        <taxon>Bacteria</taxon>
        <taxon>Pseudomonadati</taxon>
        <taxon>Pseudomonadota</taxon>
        <taxon>Alphaproteobacteria</taxon>
        <taxon>Hyphomicrobiales</taxon>
        <taxon>Nitrobacteraceae</taxon>
        <taxon>Rhodopseudomonas</taxon>
    </lineage>
</organism>
<feature type="chain" id="PRO_1000070840" description="Cytochrome c-type biogenesis protein CcmE">
    <location>
        <begin position="1"/>
        <end position="164"/>
    </location>
</feature>
<feature type="topological domain" description="Cytoplasmic" evidence="1">
    <location>
        <begin position="1"/>
        <end position="7"/>
    </location>
</feature>
<feature type="transmembrane region" description="Helical; Signal-anchor for type II membrane protein" evidence="1">
    <location>
        <begin position="8"/>
        <end position="28"/>
    </location>
</feature>
<feature type="topological domain" description="Periplasmic" evidence="1">
    <location>
        <begin position="29"/>
        <end position="164"/>
    </location>
</feature>
<feature type="region of interest" description="Disordered" evidence="2">
    <location>
        <begin position="137"/>
        <end position="164"/>
    </location>
</feature>
<feature type="compositionally biased region" description="Basic and acidic residues" evidence="2">
    <location>
        <begin position="137"/>
        <end position="149"/>
    </location>
</feature>
<feature type="compositionally biased region" description="Low complexity" evidence="2">
    <location>
        <begin position="153"/>
        <end position="164"/>
    </location>
</feature>
<feature type="binding site" description="covalent" evidence="1">
    <location>
        <position position="122"/>
    </location>
    <ligand>
        <name>heme</name>
        <dbReference type="ChEBI" id="CHEBI:30413"/>
    </ligand>
</feature>
<feature type="binding site" description="axial binding residue" evidence="1">
    <location>
        <position position="126"/>
    </location>
    <ligand>
        <name>heme</name>
        <dbReference type="ChEBI" id="CHEBI:30413"/>
    </ligand>
    <ligandPart>
        <name>Fe</name>
        <dbReference type="ChEBI" id="CHEBI:18248"/>
    </ligandPart>
</feature>
<proteinExistence type="inferred from homology"/>
<keyword id="KW-0997">Cell inner membrane</keyword>
<keyword id="KW-1003">Cell membrane</keyword>
<keyword id="KW-0201">Cytochrome c-type biogenesis</keyword>
<keyword id="KW-0349">Heme</keyword>
<keyword id="KW-0408">Iron</keyword>
<keyword id="KW-0472">Membrane</keyword>
<keyword id="KW-0479">Metal-binding</keyword>
<keyword id="KW-0735">Signal-anchor</keyword>
<keyword id="KW-0812">Transmembrane</keyword>
<keyword id="KW-1133">Transmembrane helix</keyword>
<reference key="1">
    <citation type="submission" date="2006-03" db="EMBL/GenBank/DDBJ databases">
        <title>Complete sequence of Rhodopseudomonas palustris BisB5.</title>
        <authorList>
            <consortium name="US DOE Joint Genome Institute"/>
            <person name="Copeland A."/>
            <person name="Lucas S."/>
            <person name="Lapidus A."/>
            <person name="Barry K."/>
            <person name="Detter J.C."/>
            <person name="Glavina del Rio T."/>
            <person name="Hammon N."/>
            <person name="Israni S."/>
            <person name="Dalin E."/>
            <person name="Tice H."/>
            <person name="Pitluck S."/>
            <person name="Chain P."/>
            <person name="Malfatti S."/>
            <person name="Shin M."/>
            <person name="Vergez L."/>
            <person name="Schmutz J."/>
            <person name="Larimer F."/>
            <person name="Land M."/>
            <person name="Hauser L."/>
            <person name="Pelletier D.A."/>
            <person name="Kyrpides N."/>
            <person name="Lykidis A."/>
            <person name="Oda Y."/>
            <person name="Harwood C.S."/>
            <person name="Richardson P."/>
        </authorList>
    </citation>
    <scope>NUCLEOTIDE SEQUENCE [LARGE SCALE GENOMIC DNA]</scope>
    <source>
        <strain>BisB5</strain>
    </source>
</reference>
<protein>
    <recommendedName>
        <fullName evidence="1">Cytochrome c-type biogenesis protein CcmE</fullName>
    </recommendedName>
    <alternativeName>
        <fullName evidence="1">Cytochrome c maturation protein E</fullName>
    </alternativeName>
    <alternativeName>
        <fullName evidence="1">Heme chaperone CcmE</fullName>
    </alternativeName>
</protein>
<name>CCME_RHOPS</name>